<name>PXL2A_XENLA</name>
<feature type="chain" id="PRO_0000398784" description="Peroxiredoxin-like 2A">
    <location>
        <begin position="1"/>
        <end position="227"/>
    </location>
</feature>
<feature type="region of interest" description="Thioredoxin fold" evidence="1">
    <location>
        <begin position="13"/>
        <end position="111"/>
    </location>
</feature>
<feature type="active site" description="Redox-active" evidence="1">
    <location>
        <position position="84"/>
    </location>
</feature>
<feature type="active site" description="Redox-active" evidence="1">
    <location>
        <position position="87"/>
    </location>
</feature>
<proteinExistence type="evidence at transcript level"/>
<accession>Q641F0</accession>
<gene>
    <name type="primary">prxl2a</name>
    <name type="synonym">fam213a</name>
    <name type="synonym">pamm</name>
</gene>
<keyword id="KW-0049">Antioxidant</keyword>
<keyword id="KW-0963">Cytoplasm</keyword>
<keyword id="KW-0676">Redox-active center</keyword>
<keyword id="KW-1185">Reference proteome</keyword>
<protein>
    <recommendedName>
        <fullName>Peroxiredoxin-like 2A</fullName>
    </recommendedName>
    <alternativeName>
        <fullName>Peroxiredoxin-like 2 activated in M-CSF stimulated monocytes</fullName>
        <shortName>Protein PAMM</shortName>
    </alternativeName>
    <alternativeName>
        <fullName>Redox-regulatory protein FAM213A</fullName>
    </alternativeName>
</protein>
<reference key="1">
    <citation type="submission" date="2004-09" db="EMBL/GenBank/DDBJ databases">
        <authorList>
            <consortium name="NIH - Xenopus Gene Collection (XGC) project"/>
        </authorList>
    </citation>
    <scope>NUCLEOTIDE SEQUENCE [LARGE SCALE MRNA]</scope>
    <source>
        <tissue>Kidney</tissue>
    </source>
</reference>
<evidence type="ECO:0000250" key="1"/>
<evidence type="ECO:0000305" key="2"/>
<comment type="function">
    <text evidence="1">Involved in redox regulation of the cell. Acts as an antioxidant (By similarity).</text>
</comment>
<comment type="subcellular location">
    <subcellularLocation>
        <location evidence="1">Cytoplasm</location>
    </subcellularLocation>
</comment>
<comment type="miscellaneous">
    <text>The active site cysteines correspond to the redox-active cysteines of peroxiredoxins.</text>
</comment>
<comment type="similarity">
    <text evidence="2">Belongs to the peroxiredoxin-like PRXL2 family. PRXL2A subfamily.</text>
</comment>
<comment type="sequence caution" evidence="2">
    <conflict type="erroneous initiation">
        <sequence resource="EMBL-CDS" id="AAH82387"/>
    </conflict>
    <text>Truncated N-terminus.</text>
</comment>
<comment type="sequence caution" evidence="2">
    <conflict type="erroneous termination">
        <sequence resource="EMBL-CDS" id="AAH82387"/>
    </conflict>
    <text>Truncated C-terminus.</text>
</comment>
<dbReference type="EMBL" id="BC082387">
    <property type="protein sequence ID" value="AAH82387.1"/>
    <property type="status" value="ALT_SEQ"/>
    <property type="molecule type" value="mRNA"/>
</dbReference>
<dbReference type="RefSeq" id="NP_001087861.1">
    <property type="nucleotide sequence ID" value="NM_001094392.1"/>
</dbReference>
<dbReference type="SMR" id="Q641F0"/>
<dbReference type="GeneID" id="447722"/>
<dbReference type="KEGG" id="xla:447722"/>
<dbReference type="AGR" id="Xenbase:XB-GENE-962672"/>
<dbReference type="CTD" id="447722"/>
<dbReference type="Xenbase" id="XB-GENE-962672">
    <property type="gene designation" value="prxl2a.L"/>
</dbReference>
<dbReference type="OrthoDB" id="40334at2759"/>
<dbReference type="Proteomes" id="UP000186698">
    <property type="component" value="Chromosome 7L"/>
</dbReference>
<dbReference type="Bgee" id="447722">
    <property type="expression patterns" value="Expressed in camera-type eye and 19 other cell types or tissues"/>
</dbReference>
<dbReference type="GO" id="GO:0005737">
    <property type="term" value="C:cytoplasm"/>
    <property type="evidence" value="ECO:0000318"/>
    <property type="project" value="GO_Central"/>
</dbReference>
<dbReference type="GO" id="GO:0016209">
    <property type="term" value="F:antioxidant activity"/>
    <property type="evidence" value="ECO:0000318"/>
    <property type="project" value="GO_Central"/>
</dbReference>
<dbReference type="CDD" id="cd02970">
    <property type="entry name" value="PRX_like2"/>
    <property type="match status" value="1"/>
</dbReference>
<dbReference type="FunFam" id="3.40.30.10:FF:000312">
    <property type="entry name" value="redox-regulatory protein FAM213A isoform X1"/>
    <property type="match status" value="1"/>
</dbReference>
<dbReference type="InterPro" id="IPR032801">
    <property type="entry name" value="PXL2A/B/C"/>
</dbReference>
<dbReference type="PANTHER" id="PTHR28630">
    <property type="match status" value="1"/>
</dbReference>
<dbReference type="PANTHER" id="PTHR28630:SF31">
    <property type="entry name" value="PEROXIREDOXIN-LIKE 2A"/>
    <property type="match status" value="1"/>
</dbReference>
<dbReference type="Pfam" id="PF13911">
    <property type="entry name" value="AhpC-TSA_2"/>
    <property type="match status" value="1"/>
</dbReference>
<sequence length="227" mass="25221">MFDLSDQLITMGLWSISIGAFGAAVAGILLANTDFFLSQTEKATLDYLEETELKTIGEEPRLFKAKDLWERDGAVIMAVRRPGCFLCREEASGLSTLKPQLDQLGVPLYAIVKENIGNEVEHFQPYFNGKVFLDAKGQFYGPQKRKMMLLGLVRLGVWQNFRRAWKGGFEGNLEGEGLILGGMFVIGSGKQGILLEHREKEFGDKANLTAVLDAARKISKQTAQNDN</sequence>
<organism>
    <name type="scientific">Xenopus laevis</name>
    <name type="common">African clawed frog</name>
    <dbReference type="NCBI Taxonomy" id="8355"/>
    <lineage>
        <taxon>Eukaryota</taxon>
        <taxon>Metazoa</taxon>
        <taxon>Chordata</taxon>
        <taxon>Craniata</taxon>
        <taxon>Vertebrata</taxon>
        <taxon>Euteleostomi</taxon>
        <taxon>Amphibia</taxon>
        <taxon>Batrachia</taxon>
        <taxon>Anura</taxon>
        <taxon>Pipoidea</taxon>
        <taxon>Pipidae</taxon>
        <taxon>Xenopodinae</taxon>
        <taxon>Xenopus</taxon>
        <taxon>Xenopus</taxon>
    </lineage>
</organism>